<dbReference type="EC" id="7.5.2.6" evidence="1"/>
<dbReference type="EMBL" id="CP000057">
    <property type="protein sequence ID" value="AAX87063.1"/>
    <property type="molecule type" value="Genomic_DNA"/>
</dbReference>
<dbReference type="RefSeq" id="WP_011271803.1">
    <property type="nucleotide sequence ID" value="NC_007146.2"/>
</dbReference>
<dbReference type="SMR" id="Q4QPI4"/>
<dbReference type="KEGG" id="hit:NTHI0072"/>
<dbReference type="HOGENOM" id="CLU_000604_84_4_6"/>
<dbReference type="Proteomes" id="UP000002525">
    <property type="component" value="Chromosome"/>
</dbReference>
<dbReference type="GO" id="GO:0005886">
    <property type="term" value="C:plasma membrane"/>
    <property type="evidence" value="ECO:0007669"/>
    <property type="project" value="UniProtKB-SubCell"/>
</dbReference>
<dbReference type="GO" id="GO:0015421">
    <property type="term" value="F:ABC-type oligopeptide transporter activity"/>
    <property type="evidence" value="ECO:0007669"/>
    <property type="project" value="TreeGrafter"/>
</dbReference>
<dbReference type="GO" id="GO:0005524">
    <property type="term" value="F:ATP binding"/>
    <property type="evidence" value="ECO:0007669"/>
    <property type="project" value="UniProtKB-KW"/>
</dbReference>
<dbReference type="GO" id="GO:0016887">
    <property type="term" value="F:ATP hydrolysis activity"/>
    <property type="evidence" value="ECO:0007669"/>
    <property type="project" value="InterPro"/>
</dbReference>
<dbReference type="GO" id="GO:0034040">
    <property type="term" value="F:ATPase-coupled lipid transmembrane transporter activity"/>
    <property type="evidence" value="ECO:0007669"/>
    <property type="project" value="InterPro"/>
</dbReference>
<dbReference type="CDD" id="cd18552">
    <property type="entry name" value="ABC_6TM_MsbA_like"/>
    <property type="match status" value="1"/>
</dbReference>
<dbReference type="FunFam" id="1.20.1560.10:FF:000008">
    <property type="entry name" value="Lipid A export ATP-binding/permease protein MsbA"/>
    <property type="match status" value="1"/>
</dbReference>
<dbReference type="FunFam" id="3.40.50.300:FF:000140">
    <property type="entry name" value="Lipid A export ATP-binding/permease protein MsbA"/>
    <property type="match status" value="1"/>
</dbReference>
<dbReference type="Gene3D" id="1.20.1560.10">
    <property type="entry name" value="ABC transporter type 1, transmembrane domain"/>
    <property type="match status" value="1"/>
</dbReference>
<dbReference type="Gene3D" id="3.40.50.300">
    <property type="entry name" value="P-loop containing nucleotide triphosphate hydrolases"/>
    <property type="match status" value="1"/>
</dbReference>
<dbReference type="InterPro" id="IPR003593">
    <property type="entry name" value="AAA+_ATPase"/>
</dbReference>
<dbReference type="InterPro" id="IPR011527">
    <property type="entry name" value="ABC1_TM_dom"/>
</dbReference>
<dbReference type="InterPro" id="IPR036640">
    <property type="entry name" value="ABC1_TM_sf"/>
</dbReference>
<dbReference type="InterPro" id="IPR003439">
    <property type="entry name" value="ABC_transporter-like_ATP-bd"/>
</dbReference>
<dbReference type="InterPro" id="IPR017871">
    <property type="entry name" value="ABC_transporter-like_CS"/>
</dbReference>
<dbReference type="InterPro" id="IPR011917">
    <property type="entry name" value="ABC_transpr_lipidA"/>
</dbReference>
<dbReference type="InterPro" id="IPR027417">
    <property type="entry name" value="P-loop_NTPase"/>
</dbReference>
<dbReference type="InterPro" id="IPR039421">
    <property type="entry name" value="Type_1_exporter"/>
</dbReference>
<dbReference type="NCBIfam" id="TIGR02203">
    <property type="entry name" value="MsbA_lipidA"/>
    <property type="match status" value="1"/>
</dbReference>
<dbReference type="NCBIfam" id="NF008381">
    <property type="entry name" value="PRK11176.1"/>
    <property type="match status" value="1"/>
</dbReference>
<dbReference type="PANTHER" id="PTHR43394:SF1">
    <property type="entry name" value="ATP-BINDING CASSETTE SUB-FAMILY B MEMBER 10, MITOCHONDRIAL"/>
    <property type="match status" value="1"/>
</dbReference>
<dbReference type="PANTHER" id="PTHR43394">
    <property type="entry name" value="ATP-DEPENDENT PERMEASE MDL1, MITOCHONDRIAL"/>
    <property type="match status" value="1"/>
</dbReference>
<dbReference type="Pfam" id="PF00664">
    <property type="entry name" value="ABC_membrane"/>
    <property type="match status" value="1"/>
</dbReference>
<dbReference type="Pfam" id="PF00005">
    <property type="entry name" value="ABC_tran"/>
    <property type="match status" value="1"/>
</dbReference>
<dbReference type="SMART" id="SM00382">
    <property type="entry name" value="AAA"/>
    <property type="match status" value="1"/>
</dbReference>
<dbReference type="SUPFAM" id="SSF90123">
    <property type="entry name" value="ABC transporter transmembrane region"/>
    <property type="match status" value="1"/>
</dbReference>
<dbReference type="SUPFAM" id="SSF52540">
    <property type="entry name" value="P-loop containing nucleoside triphosphate hydrolases"/>
    <property type="match status" value="1"/>
</dbReference>
<dbReference type="PROSITE" id="PS50929">
    <property type="entry name" value="ABC_TM1F"/>
    <property type="match status" value="1"/>
</dbReference>
<dbReference type="PROSITE" id="PS00211">
    <property type="entry name" value="ABC_TRANSPORTER_1"/>
    <property type="match status" value="1"/>
</dbReference>
<dbReference type="PROSITE" id="PS50893">
    <property type="entry name" value="ABC_TRANSPORTER_2"/>
    <property type="match status" value="1"/>
</dbReference>
<dbReference type="PROSITE" id="PS51239">
    <property type="entry name" value="MSBA"/>
    <property type="match status" value="1"/>
</dbReference>
<keyword id="KW-0067">ATP-binding</keyword>
<keyword id="KW-0997">Cell inner membrane</keyword>
<keyword id="KW-1003">Cell membrane</keyword>
<keyword id="KW-0445">Lipid transport</keyword>
<keyword id="KW-0472">Membrane</keyword>
<keyword id="KW-0547">Nucleotide-binding</keyword>
<keyword id="KW-1278">Translocase</keyword>
<keyword id="KW-0812">Transmembrane</keyword>
<keyword id="KW-1133">Transmembrane helix</keyword>
<keyword id="KW-0813">Transport</keyword>
<accession>Q4QPI4</accession>
<evidence type="ECO:0000255" key="1">
    <source>
        <dbReference type="HAMAP-Rule" id="MF_01703"/>
    </source>
</evidence>
<comment type="function">
    <text evidence="1">Involved in lipopolysaccharide (LPS) biosynthesis. Translocates lipid A-core from the inner to the outer leaflet of the inner membrane. Transmembrane domains (TMD) form a pore in the inner membrane and the ATP-binding domain (NBD) is responsible for energy generation.</text>
</comment>
<comment type="catalytic activity">
    <reaction evidence="1">
        <text>ATP + H2O + lipid A-core oligosaccharideSide 1 = ADP + phosphate + lipid A-core oligosaccharideSide 2.</text>
        <dbReference type="EC" id="7.5.2.6"/>
    </reaction>
</comment>
<comment type="subunit">
    <text evidence="1">Homodimer.</text>
</comment>
<comment type="subcellular location">
    <subcellularLocation>
        <location evidence="1">Cell inner membrane</location>
        <topology evidence="1">Multi-pass membrane protein</topology>
    </subcellularLocation>
</comment>
<comment type="domain">
    <text evidence="1">In MsbA the ATP-binding domain (NBD) and the transmembrane domain (TMD) are fused.</text>
</comment>
<comment type="similarity">
    <text evidence="1">Belongs to the ABC transporter superfamily. Lipid exporter (TC 3.A.1.106) family.</text>
</comment>
<gene>
    <name evidence="1" type="primary">msbA</name>
    <name type="ordered locus">NTHI0072</name>
</gene>
<reference key="1">
    <citation type="journal article" date="2005" name="J. Bacteriol.">
        <title>Genomic sequence of an otitis media isolate of nontypeable Haemophilus influenzae: comparative study with H. influenzae serotype d, strain KW20.</title>
        <authorList>
            <person name="Harrison A."/>
            <person name="Dyer D.W."/>
            <person name="Gillaspy A."/>
            <person name="Ray W.C."/>
            <person name="Mungur R."/>
            <person name="Carson M.B."/>
            <person name="Zhong H."/>
            <person name="Gipson J."/>
            <person name="Gipson M."/>
            <person name="Johnson L.S."/>
            <person name="Lewis L."/>
            <person name="Bakaletz L.O."/>
            <person name="Munson R.S. Jr."/>
        </authorList>
    </citation>
    <scope>NUCLEOTIDE SEQUENCE [LARGE SCALE GENOMIC DNA]</scope>
    <source>
        <strain>86-028NP</strain>
    </source>
</reference>
<name>MSBA_HAEI8</name>
<proteinExistence type="inferred from homology"/>
<feature type="chain" id="PRO_0000271629" description="ATP-dependent lipid A-core flippase">
    <location>
        <begin position="1"/>
        <end position="587"/>
    </location>
</feature>
<feature type="transmembrane region" description="Helical" evidence="1">
    <location>
        <begin position="31"/>
        <end position="51"/>
    </location>
</feature>
<feature type="transmembrane region" description="Helical" evidence="1">
    <location>
        <begin position="68"/>
        <end position="88"/>
    </location>
</feature>
<feature type="transmembrane region" description="Helical" evidence="1">
    <location>
        <begin position="145"/>
        <end position="165"/>
    </location>
</feature>
<feature type="transmembrane region" description="Helical" evidence="1">
    <location>
        <begin position="169"/>
        <end position="189"/>
    </location>
</feature>
<feature type="transmembrane region" description="Helical" evidence="1">
    <location>
        <begin position="259"/>
        <end position="279"/>
    </location>
</feature>
<feature type="domain" description="ABC transmembrane type-1" evidence="1">
    <location>
        <begin position="32"/>
        <end position="315"/>
    </location>
</feature>
<feature type="domain" description="ABC transporter" evidence="1">
    <location>
        <begin position="347"/>
        <end position="583"/>
    </location>
</feature>
<feature type="binding site" evidence="1">
    <location>
        <begin position="381"/>
        <end position="388"/>
    </location>
    <ligand>
        <name>ATP</name>
        <dbReference type="ChEBI" id="CHEBI:30616"/>
    </ligand>
</feature>
<protein>
    <recommendedName>
        <fullName evidence="1">ATP-dependent lipid A-core flippase</fullName>
        <ecNumber evidence="1">7.5.2.6</ecNumber>
    </recommendedName>
    <alternativeName>
        <fullName evidence="1">Lipid A export ATP-binding/permease protein MsbA</fullName>
    </alternativeName>
</protein>
<organism>
    <name type="scientific">Haemophilus influenzae (strain 86-028NP)</name>
    <dbReference type="NCBI Taxonomy" id="281310"/>
    <lineage>
        <taxon>Bacteria</taxon>
        <taxon>Pseudomonadati</taxon>
        <taxon>Pseudomonadota</taxon>
        <taxon>Gammaproteobacteria</taxon>
        <taxon>Pasteurellales</taxon>
        <taxon>Pasteurellaceae</taxon>
        <taxon>Haemophilus</taxon>
    </lineage>
</organism>
<sequence>MQEQKLQENDFSTLQTFKRLWPMIKPFKAGLIASGIALVFNALADSGLIYLLKPLLDDGFGKANHSFLKIMAFVVVGMIILRGVTNFISNYCLAWVSGKVVMTMRRRLFKHLMFMPVSFFDRNSTGKLLSRITYDSEMIASSSSGSLITIVREGAYIISLLAVMFYTSWELTLVLFVIGPIIAVLITIVSKIFRKLSKNLQDSMGELTATTEQMLKGHKVVISFGGQFVEEERFNKVSNNMRRKGMKMVTADSISDPVVQIIASLALVAVLFLATTPLIAEDNLSAGSFTVVFSSMLAMMRPLKSLTNVNSQFQRGMAACQTLFAILDLEPEKDNGTYKAEPAKGALEFKNVSFAYQGKEELALNNISFSVPAGKTVALVGRSGSGKSTIANLVTRFYDIEQGEILLDGVNIQDYRLSNLRENCAVVSQQVHLFNDTIANNIAYAAQDKYSREEIIAAAKAAYALEFIEKLPQGFDTVIGENGASLSGGQRQRLAIARALLRNSPVLILDEATSALDTESERAIQSALDELKKDRTVIVIAHRLSTIENADEILVIDHGEIRERGNHKALLEQNGAYKQLYSMQFSG</sequence>